<feature type="signal peptide" evidence="1">
    <location>
        <begin position="1"/>
        <end position="17"/>
    </location>
</feature>
<feature type="chain" id="PRO_5030538382" description="Putative sodium channel toxin Ts34">
    <location>
        <begin position="18"/>
        <end position="85"/>
    </location>
</feature>
<feature type="domain" description="LCN-type CS-alpha/beta" evidence="2">
    <location>
        <begin position="19"/>
        <end position="82"/>
    </location>
</feature>
<feature type="disulfide bond" evidence="2">
    <location>
        <begin position="30"/>
        <end position="81"/>
    </location>
</feature>
<feature type="disulfide bond" evidence="2">
    <location>
        <begin position="34"/>
        <end position="57"/>
    </location>
</feature>
<feature type="disulfide bond" evidence="2">
    <location>
        <begin position="43"/>
        <end position="62"/>
    </location>
</feature>
<feature type="disulfide bond" evidence="2">
    <location>
        <begin position="47"/>
        <end position="64"/>
    </location>
</feature>
<dbReference type="EMBL" id="MT081343">
    <property type="protein sequence ID" value="QPD99025.1"/>
    <property type="molecule type" value="mRNA"/>
</dbReference>
<dbReference type="SMR" id="A0A7S8MUG8"/>
<dbReference type="GO" id="GO:0005576">
    <property type="term" value="C:extracellular region"/>
    <property type="evidence" value="ECO:0007669"/>
    <property type="project" value="UniProtKB-SubCell"/>
</dbReference>
<dbReference type="GO" id="GO:0019871">
    <property type="term" value="F:sodium channel inhibitor activity"/>
    <property type="evidence" value="ECO:0007669"/>
    <property type="project" value="InterPro"/>
</dbReference>
<dbReference type="GO" id="GO:0090729">
    <property type="term" value="F:toxin activity"/>
    <property type="evidence" value="ECO:0007669"/>
    <property type="project" value="UniProtKB-KW"/>
</dbReference>
<dbReference type="GO" id="GO:0006952">
    <property type="term" value="P:defense response"/>
    <property type="evidence" value="ECO:0007669"/>
    <property type="project" value="InterPro"/>
</dbReference>
<dbReference type="CDD" id="cd23106">
    <property type="entry name" value="neurotoxins_LC_scorpion"/>
    <property type="match status" value="1"/>
</dbReference>
<dbReference type="Gene3D" id="3.30.30.10">
    <property type="entry name" value="Knottin, scorpion toxin-like"/>
    <property type="match status" value="1"/>
</dbReference>
<dbReference type="InterPro" id="IPR044062">
    <property type="entry name" value="LCN-type_CS_alpha_beta_dom"/>
</dbReference>
<dbReference type="InterPro" id="IPR003614">
    <property type="entry name" value="Scorpion_toxin-like"/>
</dbReference>
<dbReference type="InterPro" id="IPR036574">
    <property type="entry name" value="Scorpion_toxin-like_sf"/>
</dbReference>
<dbReference type="InterPro" id="IPR018218">
    <property type="entry name" value="Scorpion_toxinL"/>
</dbReference>
<dbReference type="InterPro" id="IPR002061">
    <property type="entry name" value="Scorpion_toxinL/defensin"/>
</dbReference>
<dbReference type="Pfam" id="PF00537">
    <property type="entry name" value="Toxin_3"/>
    <property type="match status" value="1"/>
</dbReference>
<dbReference type="PRINTS" id="PR00285">
    <property type="entry name" value="SCORPNTOXIN"/>
</dbReference>
<dbReference type="SMART" id="SM00505">
    <property type="entry name" value="Knot1"/>
    <property type="match status" value="1"/>
</dbReference>
<dbReference type="SUPFAM" id="SSF57095">
    <property type="entry name" value="Scorpion toxin-like"/>
    <property type="match status" value="1"/>
</dbReference>
<dbReference type="PROSITE" id="PS51863">
    <property type="entry name" value="LCN_CSAB"/>
    <property type="match status" value="1"/>
</dbReference>
<name>SCX34_TITSE</name>
<keyword id="KW-1015">Disulfide bond</keyword>
<keyword id="KW-0872">Ion channel impairing toxin</keyword>
<keyword id="KW-0528">Neurotoxin</keyword>
<keyword id="KW-0964">Secreted</keyword>
<keyword id="KW-0732">Signal</keyword>
<keyword id="KW-0800">Toxin</keyword>
<keyword id="KW-0738">Voltage-gated sodium channel impairing toxin</keyword>
<comment type="function">
    <text evidence="5">Putative sodium channel toxin.</text>
</comment>
<comment type="subcellular location">
    <subcellularLocation>
        <location evidence="5">Secreted</location>
    </subcellularLocation>
</comment>
<comment type="tissue specificity">
    <text evidence="5">Expressed by the venom gland.</text>
</comment>
<comment type="domain">
    <text evidence="4">Has the structural arrangement of an alpha-helix connected to antiparallel beta-sheets by disulfide bonds (CS-alpha/beta).</text>
</comment>
<comment type="similarity">
    <text evidence="4">Belongs to the long (4 C-C) scorpion toxin superfamily. Sodium channel inhibitor family.</text>
</comment>
<sequence>MNLPLLLLITILIEIHALKDGYVIYKNSNCKYSCNINEKWKYCSPLCQKKHGKTGYCYFFACWCTDLPNDVPIYGETGSYCWSNK</sequence>
<accession>A0A7S8MUG8</accession>
<evidence type="ECO:0000255" key="1"/>
<evidence type="ECO:0000255" key="2">
    <source>
        <dbReference type="PROSITE-ProRule" id="PRU01210"/>
    </source>
</evidence>
<evidence type="ECO:0000303" key="3">
    <source>
    </source>
</evidence>
<evidence type="ECO:0000305" key="4"/>
<evidence type="ECO:0000305" key="5">
    <source>
    </source>
</evidence>
<evidence type="ECO:0000312" key="6">
    <source>
        <dbReference type="EMBL" id="QPD99025.1"/>
    </source>
</evidence>
<protein>
    <recommendedName>
        <fullName evidence="3">Putative sodium channel toxin Ts34</fullName>
    </recommendedName>
    <alternativeName>
        <fullName evidence="4">Tityustoxin-34</fullName>
    </alternativeName>
</protein>
<organism>
    <name type="scientific">Tityus serrulatus</name>
    <name type="common">Brazilian scorpion</name>
    <dbReference type="NCBI Taxonomy" id="6887"/>
    <lineage>
        <taxon>Eukaryota</taxon>
        <taxon>Metazoa</taxon>
        <taxon>Ecdysozoa</taxon>
        <taxon>Arthropoda</taxon>
        <taxon>Chelicerata</taxon>
        <taxon>Arachnida</taxon>
        <taxon>Scorpiones</taxon>
        <taxon>Buthida</taxon>
        <taxon>Buthoidea</taxon>
        <taxon>Buthidae</taxon>
        <taxon>Tityus</taxon>
    </lineage>
</organism>
<proteinExistence type="inferred from homology"/>
<reference evidence="6" key="1">
    <citation type="journal article" date="2021" name="Toxicon">
        <title>Novel components of Tityus serrulatus venom: a transcriptomic approach.</title>
        <authorList>
            <person name="Kalapothakis Y."/>
            <person name="Miranda K."/>
            <person name="Pereira A.H."/>
            <person name="Witt A.S.A."/>
            <person name="Marani C."/>
            <person name="Martins A.P."/>
            <person name="Leal H.G."/>
            <person name="Campos-Junior E."/>
            <person name="Pimenta A.M.C."/>
            <person name="Borges A."/>
            <person name="Chavez-Olortegui C."/>
            <person name="Kalapothakis E."/>
        </authorList>
    </citation>
    <scope>NUCLEOTIDE SEQUENCE [MRNA]</scope>
    <source>
        <tissue>Telson</tissue>
    </source>
</reference>